<gene>
    <name type="primary">purQ</name>
</gene>
<proteinExistence type="inferred from homology"/>
<protein>
    <recommendedName>
        <fullName>Phosphoribosylformylglycinamidine synthase subunit PurQ</fullName>
        <shortName>FGAM synthase</shortName>
        <ecNumber>6.3.5.3</ecNumber>
    </recommendedName>
    <alternativeName>
        <fullName>Formylglycinamide ribonucleotide amidotransferase subunit I</fullName>
        <shortName>FGAR amidotransferase I</shortName>
        <shortName>FGAR-AT I</shortName>
    </alternativeName>
    <alternativeName>
        <fullName>Glutaminase PurQ</fullName>
        <ecNumber>3.5.1.2</ecNumber>
    </alternativeName>
    <alternativeName>
        <fullName>Phosphoribosylformylglycinamidine synthase subunit I</fullName>
    </alternativeName>
</protein>
<organism>
    <name type="scientific">Lacticaseibacillus casei</name>
    <name type="common">Lactobacillus casei</name>
    <dbReference type="NCBI Taxonomy" id="1582"/>
    <lineage>
        <taxon>Bacteria</taxon>
        <taxon>Bacillati</taxon>
        <taxon>Bacillota</taxon>
        <taxon>Bacilli</taxon>
        <taxon>Lactobacillales</taxon>
        <taxon>Lactobacillaceae</taxon>
        <taxon>Lacticaseibacillus</taxon>
    </lineage>
</organism>
<feature type="chain" id="PRO_0000100559" description="Phosphoribosylformylglycinamidine synthase subunit PurQ">
    <location>
        <begin position="1" status="less than"/>
        <end position="54"/>
    </location>
</feature>
<feature type="domain" description="Glutamine amidotransferase type-1" evidence="2">
    <location>
        <begin position="1" status="less than"/>
        <end position="51"/>
    </location>
</feature>
<feature type="active site" evidence="2">
    <location>
        <position position="20"/>
    </location>
</feature>
<feature type="active site" evidence="2">
    <location>
        <position position="22"/>
    </location>
</feature>
<feature type="non-terminal residue">
    <location>
        <position position="1"/>
    </location>
</feature>
<reference key="1">
    <citation type="journal article" date="1992" name="Gene">
        <title>Isolation and complete sequence of the purL gene encoding FGAM synthase II in Lactobacillus casei.</title>
        <authorList>
            <person name="Gu Z.-M."/>
            <person name="Martindale D.W."/>
            <person name="Lee B.H."/>
        </authorList>
    </citation>
    <scope>NUCLEOTIDE SEQUENCE [GENOMIC DNA]</scope>
</reference>
<comment type="function">
    <text evidence="1">Part of the phosphoribosylformylglycinamidine synthase complex involved in the purines biosynthetic pathway. Catalyzes the ATP-dependent conversion of formylglycinamide ribonucleotide (FGAR) and glutamine to yield formylglycinamidine ribonucleotide (FGAM) and glutamate. The FGAM synthase complex is composed of three subunits. PurQ produces an ammonia molecule by converting glutamine to glutamate. PurL transfers the ammonia molecule to FGAR to form FGAM in an ATP-dependent manner. PurS interacts with PurQ and PurL and is thought to assist in the transfer of the ammonia molecule from PurQ to PurL (By similarity).</text>
</comment>
<comment type="catalytic activity">
    <reaction>
        <text>N(2)-formyl-N(1)-(5-phospho-beta-D-ribosyl)glycinamide + L-glutamine + ATP + H2O = 2-formamido-N(1)-(5-O-phospho-beta-D-ribosyl)acetamidine + L-glutamate + ADP + phosphate + H(+)</text>
        <dbReference type="Rhea" id="RHEA:17129"/>
        <dbReference type="ChEBI" id="CHEBI:15377"/>
        <dbReference type="ChEBI" id="CHEBI:15378"/>
        <dbReference type="ChEBI" id="CHEBI:29985"/>
        <dbReference type="ChEBI" id="CHEBI:30616"/>
        <dbReference type="ChEBI" id="CHEBI:43474"/>
        <dbReference type="ChEBI" id="CHEBI:58359"/>
        <dbReference type="ChEBI" id="CHEBI:147286"/>
        <dbReference type="ChEBI" id="CHEBI:147287"/>
        <dbReference type="ChEBI" id="CHEBI:456216"/>
        <dbReference type="EC" id="6.3.5.3"/>
    </reaction>
</comment>
<comment type="catalytic activity">
    <reaction>
        <text>L-glutamine + H2O = L-glutamate + NH4(+)</text>
        <dbReference type="Rhea" id="RHEA:15889"/>
        <dbReference type="ChEBI" id="CHEBI:15377"/>
        <dbReference type="ChEBI" id="CHEBI:28938"/>
        <dbReference type="ChEBI" id="CHEBI:29985"/>
        <dbReference type="ChEBI" id="CHEBI:58359"/>
        <dbReference type="EC" id="3.5.1.2"/>
    </reaction>
</comment>
<comment type="pathway">
    <text>Purine metabolism; IMP biosynthesis via de novo pathway; 5-amino-1-(5-phospho-D-ribosyl)imidazole from N(2)-formyl-N(1)-(5-phospho-D-ribosyl)glycinamide: step 1/2.</text>
</comment>
<comment type="subunit">
    <text evidence="1">Part of the FGAM synthase complex composed of 1 PurL, 1 PurQ and 2 PurS subunits.</text>
</comment>
<comment type="subcellular location">
    <subcellularLocation>
        <location evidence="1">Cytoplasm</location>
    </subcellularLocation>
</comment>
<keyword id="KW-0067">ATP-binding</keyword>
<keyword id="KW-0963">Cytoplasm</keyword>
<keyword id="KW-0315">Glutamine amidotransferase</keyword>
<keyword id="KW-0378">Hydrolase</keyword>
<keyword id="KW-0436">Ligase</keyword>
<keyword id="KW-0547">Nucleotide-binding</keyword>
<keyword id="KW-0658">Purine biosynthesis</keyword>
<accession>P35851</accession>
<sequence length="54" mass="5604">MHDIAGVTNETGNVLGMMPHPERAVEALLGGTDGLGVFQSLINQTEGADVRGAR</sequence>
<evidence type="ECO:0000250" key="1"/>
<evidence type="ECO:0000255" key="2">
    <source>
        <dbReference type="PROSITE-ProRule" id="PRU00605"/>
    </source>
</evidence>
<name>PURQ_LACCA</name>
<dbReference type="EC" id="6.3.5.3"/>
<dbReference type="EC" id="3.5.1.2"/>
<dbReference type="EMBL" id="M85265">
    <property type="protein sequence ID" value="AAC36946.1"/>
    <property type="molecule type" value="Genomic_DNA"/>
</dbReference>
<dbReference type="PIR" id="PC1135">
    <property type="entry name" value="PC1135"/>
</dbReference>
<dbReference type="SMR" id="P35851"/>
<dbReference type="STRING" id="1582.AAW28_12375"/>
<dbReference type="eggNOG" id="COG0047">
    <property type="taxonomic scope" value="Bacteria"/>
</dbReference>
<dbReference type="UniPathway" id="UPA00074">
    <property type="reaction ID" value="UER00128"/>
</dbReference>
<dbReference type="GO" id="GO:0005737">
    <property type="term" value="C:cytoplasm"/>
    <property type="evidence" value="ECO:0007669"/>
    <property type="project" value="UniProtKB-SubCell"/>
</dbReference>
<dbReference type="GO" id="GO:0005524">
    <property type="term" value="F:ATP binding"/>
    <property type="evidence" value="ECO:0007669"/>
    <property type="project" value="UniProtKB-KW"/>
</dbReference>
<dbReference type="GO" id="GO:0004359">
    <property type="term" value="F:glutaminase activity"/>
    <property type="evidence" value="ECO:0007669"/>
    <property type="project" value="UniProtKB-EC"/>
</dbReference>
<dbReference type="GO" id="GO:0004642">
    <property type="term" value="F:phosphoribosylformylglycinamidine synthase activity"/>
    <property type="evidence" value="ECO:0007669"/>
    <property type="project" value="UniProtKB-EC"/>
</dbReference>
<dbReference type="GO" id="GO:0006189">
    <property type="term" value="P:'de novo' IMP biosynthetic process"/>
    <property type="evidence" value="ECO:0007669"/>
    <property type="project" value="UniProtKB-UniPathway"/>
</dbReference>
<dbReference type="Gene3D" id="3.40.50.880">
    <property type="match status" value="1"/>
</dbReference>
<dbReference type="InterPro" id="IPR029062">
    <property type="entry name" value="Class_I_gatase-like"/>
</dbReference>
<dbReference type="InterPro" id="IPR010075">
    <property type="entry name" value="PRibForGlyAmidine_synth_PurQ"/>
</dbReference>
<dbReference type="PANTHER" id="PTHR47552">
    <property type="entry name" value="PHOSPHORIBOSYLFORMYLGLYCINAMIDINE SYNTHASE SUBUNIT PURQ"/>
    <property type="match status" value="1"/>
</dbReference>
<dbReference type="PANTHER" id="PTHR47552:SF1">
    <property type="entry name" value="PHOSPHORIBOSYLFORMYLGLYCINAMIDINE SYNTHASE SUBUNIT PURQ"/>
    <property type="match status" value="1"/>
</dbReference>
<dbReference type="Pfam" id="PF13507">
    <property type="entry name" value="GATase_5"/>
    <property type="match status" value="1"/>
</dbReference>
<dbReference type="SUPFAM" id="SSF52317">
    <property type="entry name" value="Class I glutamine amidotransferase-like"/>
    <property type="match status" value="1"/>
</dbReference>